<name>GLO2_ECO57</name>
<dbReference type="EC" id="3.1.2.6" evidence="1"/>
<dbReference type="EMBL" id="AE005174">
    <property type="protein sequence ID" value="AAG54508.1"/>
    <property type="molecule type" value="Genomic_DNA"/>
</dbReference>
<dbReference type="EMBL" id="BA000007">
    <property type="protein sequence ID" value="BAB33631.1"/>
    <property type="molecule type" value="Genomic_DNA"/>
</dbReference>
<dbReference type="PIR" id="H85505">
    <property type="entry name" value="H85505"/>
</dbReference>
<dbReference type="PIR" id="H90654">
    <property type="entry name" value="H90654"/>
</dbReference>
<dbReference type="RefSeq" id="NP_308235.1">
    <property type="nucleotide sequence ID" value="NC_002695.1"/>
</dbReference>
<dbReference type="RefSeq" id="WP_001052715.1">
    <property type="nucleotide sequence ID" value="NZ_VOAI01000020.1"/>
</dbReference>
<dbReference type="SMR" id="P0AC85"/>
<dbReference type="STRING" id="155864.Z0236"/>
<dbReference type="GeneID" id="914044"/>
<dbReference type="KEGG" id="ece:Z0236"/>
<dbReference type="KEGG" id="ecs:ECs_0208"/>
<dbReference type="PATRIC" id="fig|386585.9.peg.312"/>
<dbReference type="eggNOG" id="COG0491">
    <property type="taxonomic scope" value="Bacteria"/>
</dbReference>
<dbReference type="HOGENOM" id="CLU_030571_4_1_6"/>
<dbReference type="OMA" id="NYIWLLQ"/>
<dbReference type="UniPathway" id="UPA00619">
    <property type="reaction ID" value="UER00676"/>
</dbReference>
<dbReference type="Proteomes" id="UP000000558">
    <property type="component" value="Chromosome"/>
</dbReference>
<dbReference type="Proteomes" id="UP000002519">
    <property type="component" value="Chromosome"/>
</dbReference>
<dbReference type="GO" id="GO:0004416">
    <property type="term" value="F:hydroxyacylglutathione hydrolase activity"/>
    <property type="evidence" value="ECO:0007669"/>
    <property type="project" value="UniProtKB-UniRule"/>
</dbReference>
<dbReference type="GO" id="GO:0046872">
    <property type="term" value="F:metal ion binding"/>
    <property type="evidence" value="ECO:0007669"/>
    <property type="project" value="UniProtKB-KW"/>
</dbReference>
<dbReference type="GO" id="GO:0019243">
    <property type="term" value="P:methylglyoxal catabolic process to D-lactate via S-lactoyl-glutathione"/>
    <property type="evidence" value="ECO:0007669"/>
    <property type="project" value="InterPro"/>
</dbReference>
<dbReference type="CDD" id="cd07723">
    <property type="entry name" value="hydroxyacylglutathione_hydrolase_MBL-fold"/>
    <property type="match status" value="1"/>
</dbReference>
<dbReference type="FunFam" id="3.60.15.10:FF:000012">
    <property type="entry name" value="Hydroxyacylglutathione hydrolase"/>
    <property type="match status" value="1"/>
</dbReference>
<dbReference type="Gene3D" id="3.60.15.10">
    <property type="entry name" value="Ribonuclease Z/Hydroxyacylglutathione hydrolase-like"/>
    <property type="match status" value="1"/>
</dbReference>
<dbReference type="HAMAP" id="MF_01374">
    <property type="entry name" value="Glyoxalase_2"/>
    <property type="match status" value="1"/>
</dbReference>
<dbReference type="InterPro" id="IPR035680">
    <property type="entry name" value="Clx_II_MBL"/>
</dbReference>
<dbReference type="InterPro" id="IPR050110">
    <property type="entry name" value="Glyoxalase_II_hydrolase"/>
</dbReference>
<dbReference type="InterPro" id="IPR032282">
    <property type="entry name" value="HAGH_C"/>
</dbReference>
<dbReference type="InterPro" id="IPR017782">
    <property type="entry name" value="Hydroxyacylglutathione_Hdrlase"/>
</dbReference>
<dbReference type="InterPro" id="IPR001279">
    <property type="entry name" value="Metallo-B-lactamas"/>
</dbReference>
<dbReference type="InterPro" id="IPR036866">
    <property type="entry name" value="RibonucZ/Hydroxyglut_hydro"/>
</dbReference>
<dbReference type="NCBIfam" id="TIGR03413">
    <property type="entry name" value="GSH_gloB"/>
    <property type="match status" value="1"/>
</dbReference>
<dbReference type="NCBIfam" id="NF007597">
    <property type="entry name" value="PRK10241.1"/>
    <property type="match status" value="1"/>
</dbReference>
<dbReference type="PANTHER" id="PTHR43705">
    <property type="entry name" value="HYDROXYACYLGLUTATHIONE HYDROLASE"/>
    <property type="match status" value="1"/>
</dbReference>
<dbReference type="PANTHER" id="PTHR43705:SF1">
    <property type="entry name" value="HYDROXYACYLGLUTATHIONE HYDROLASE GLOB"/>
    <property type="match status" value="1"/>
</dbReference>
<dbReference type="Pfam" id="PF16123">
    <property type="entry name" value="HAGH_C"/>
    <property type="match status" value="1"/>
</dbReference>
<dbReference type="Pfam" id="PF00753">
    <property type="entry name" value="Lactamase_B"/>
    <property type="match status" value="1"/>
</dbReference>
<dbReference type="PIRSF" id="PIRSF005457">
    <property type="entry name" value="Glx"/>
    <property type="match status" value="1"/>
</dbReference>
<dbReference type="SMART" id="SM00849">
    <property type="entry name" value="Lactamase_B"/>
    <property type="match status" value="1"/>
</dbReference>
<dbReference type="SUPFAM" id="SSF56281">
    <property type="entry name" value="Metallo-hydrolase/oxidoreductase"/>
    <property type="match status" value="1"/>
</dbReference>
<feature type="chain" id="PRO_0000192352" description="Hydroxyacylglutathione hydrolase">
    <location>
        <begin position="1"/>
        <end position="251"/>
    </location>
</feature>
<feature type="binding site" evidence="1">
    <location>
        <position position="53"/>
    </location>
    <ligand>
        <name>Zn(2+)</name>
        <dbReference type="ChEBI" id="CHEBI:29105"/>
        <label>1</label>
    </ligand>
</feature>
<feature type="binding site" evidence="1">
    <location>
        <position position="55"/>
    </location>
    <ligand>
        <name>Zn(2+)</name>
        <dbReference type="ChEBI" id="CHEBI:29105"/>
        <label>1</label>
    </ligand>
</feature>
<feature type="binding site" evidence="1">
    <location>
        <position position="57"/>
    </location>
    <ligand>
        <name>Zn(2+)</name>
        <dbReference type="ChEBI" id="CHEBI:29105"/>
        <label>2</label>
    </ligand>
</feature>
<feature type="binding site" evidence="1">
    <location>
        <position position="58"/>
    </location>
    <ligand>
        <name>Zn(2+)</name>
        <dbReference type="ChEBI" id="CHEBI:29105"/>
        <label>2</label>
    </ligand>
</feature>
<feature type="binding site" evidence="1">
    <location>
        <position position="110"/>
    </location>
    <ligand>
        <name>Zn(2+)</name>
        <dbReference type="ChEBI" id="CHEBI:29105"/>
        <label>1</label>
    </ligand>
</feature>
<feature type="binding site" evidence="1">
    <location>
        <position position="127"/>
    </location>
    <ligand>
        <name>Zn(2+)</name>
        <dbReference type="ChEBI" id="CHEBI:29105"/>
        <label>1</label>
    </ligand>
</feature>
<feature type="binding site" evidence="1">
    <location>
        <position position="127"/>
    </location>
    <ligand>
        <name>Zn(2+)</name>
        <dbReference type="ChEBI" id="CHEBI:29105"/>
        <label>2</label>
    </ligand>
</feature>
<feature type="binding site" evidence="1">
    <location>
        <position position="165"/>
    </location>
    <ligand>
        <name>Zn(2+)</name>
        <dbReference type="ChEBI" id="CHEBI:29105"/>
        <label>2</label>
    </ligand>
</feature>
<keyword id="KW-0378">Hydrolase</keyword>
<keyword id="KW-0479">Metal-binding</keyword>
<keyword id="KW-1185">Reference proteome</keyword>
<keyword id="KW-0862">Zinc</keyword>
<comment type="function">
    <text evidence="1">Thiolesterase that catalyzes the hydrolysis of S-D-lactoyl-glutathione to form glutathione and D-lactic acid.</text>
</comment>
<comment type="catalytic activity">
    <reaction evidence="1">
        <text>an S-(2-hydroxyacyl)glutathione + H2O = a 2-hydroxy carboxylate + glutathione + H(+)</text>
        <dbReference type="Rhea" id="RHEA:21864"/>
        <dbReference type="ChEBI" id="CHEBI:15377"/>
        <dbReference type="ChEBI" id="CHEBI:15378"/>
        <dbReference type="ChEBI" id="CHEBI:57925"/>
        <dbReference type="ChEBI" id="CHEBI:58896"/>
        <dbReference type="ChEBI" id="CHEBI:71261"/>
        <dbReference type="EC" id="3.1.2.6"/>
    </reaction>
</comment>
<comment type="cofactor">
    <cofactor evidence="1">
        <name>Zn(2+)</name>
        <dbReference type="ChEBI" id="CHEBI:29105"/>
    </cofactor>
    <text evidence="1">Binds 2 Zn(2+) ions per subunit.</text>
</comment>
<comment type="pathway">
    <text evidence="1">Secondary metabolite metabolism; methylglyoxal degradation; (R)-lactate from methylglyoxal: step 2/2.</text>
</comment>
<comment type="subunit">
    <text evidence="1">Monomer.</text>
</comment>
<comment type="similarity">
    <text evidence="1">Belongs to the metallo-beta-lactamase superfamily. Glyoxalase II family.</text>
</comment>
<organism>
    <name type="scientific">Escherichia coli O157:H7</name>
    <dbReference type="NCBI Taxonomy" id="83334"/>
    <lineage>
        <taxon>Bacteria</taxon>
        <taxon>Pseudomonadati</taxon>
        <taxon>Pseudomonadota</taxon>
        <taxon>Gammaproteobacteria</taxon>
        <taxon>Enterobacterales</taxon>
        <taxon>Enterobacteriaceae</taxon>
        <taxon>Escherichia</taxon>
    </lineage>
</organism>
<reference key="1">
    <citation type="journal article" date="2001" name="Nature">
        <title>Genome sequence of enterohaemorrhagic Escherichia coli O157:H7.</title>
        <authorList>
            <person name="Perna N.T."/>
            <person name="Plunkett G. III"/>
            <person name="Burland V."/>
            <person name="Mau B."/>
            <person name="Glasner J.D."/>
            <person name="Rose D.J."/>
            <person name="Mayhew G.F."/>
            <person name="Evans P.S."/>
            <person name="Gregor J."/>
            <person name="Kirkpatrick H.A."/>
            <person name="Posfai G."/>
            <person name="Hackett J."/>
            <person name="Klink S."/>
            <person name="Boutin A."/>
            <person name="Shao Y."/>
            <person name="Miller L."/>
            <person name="Grotbeck E.J."/>
            <person name="Davis N.W."/>
            <person name="Lim A."/>
            <person name="Dimalanta E.T."/>
            <person name="Potamousis K."/>
            <person name="Apodaca J."/>
            <person name="Anantharaman T.S."/>
            <person name="Lin J."/>
            <person name="Yen G."/>
            <person name="Schwartz D.C."/>
            <person name="Welch R.A."/>
            <person name="Blattner F.R."/>
        </authorList>
    </citation>
    <scope>NUCLEOTIDE SEQUENCE [LARGE SCALE GENOMIC DNA]</scope>
    <source>
        <strain>O157:H7 / EDL933 / ATCC 700927 / EHEC</strain>
    </source>
</reference>
<reference key="2">
    <citation type="journal article" date="2001" name="DNA Res.">
        <title>Complete genome sequence of enterohemorrhagic Escherichia coli O157:H7 and genomic comparison with a laboratory strain K-12.</title>
        <authorList>
            <person name="Hayashi T."/>
            <person name="Makino K."/>
            <person name="Ohnishi M."/>
            <person name="Kurokawa K."/>
            <person name="Ishii K."/>
            <person name="Yokoyama K."/>
            <person name="Han C.-G."/>
            <person name="Ohtsubo E."/>
            <person name="Nakayama K."/>
            <person name="Murata T."/>
            <person name="Tanaka M."/>
            <person name="Tobe T."/>
            <person name="Iida T."/>
            <person name="Takami H."/>
            <person name="Honda T."/>
            <person name="Sasakawa C."/>
            <person name="Ogasawara N."/>
            <person name="Yasunaga T."/>
            <person name="Kuhara S."/>
            <person name="Shiba T."/>
            <person name="Hattori M."/>
            <person name="Shinagawa H."/>
        </authorList>
    </citation>
    <scope>NUCLEOTIDE SEQUENCE [LARGE SCALE GENOMIC DNA]</scope>
    <source>
        <strain>O157:H7 / Sakai / RIMD 0509952 / EHEC</strain>
    </source>
</reference>
<sequence length="251" mass="28434">MNLNSIPAFDDNYIWVLNDEAGRCLIVDPGDAEPVLNAIAANNWQPEAIFLTHHHHDHVGGVKELVEKFPQIVVYGPQETQDKGTTQVVKDGETAFVLGHEFSVIATPGHTLGHICYFSKPYLFCGDTLFSGGCGRLFEGTASQMYQSLKKLSALPDDTLVCCAHEYTLSNMKFALSILPHDLSINDYYRKVKELRAKNQITLPVILKNERQINVFLRTEDIDLINVINEETLLQQPEERFAWLRSKKDRF</sequence>
<accession>P0AC85</accession>
<accession>Q47677</accession>
<evidence type="ECO:0000255" key="1">
    <source>
        <dbReference type="HAMAP-Rule" id="MF_01374"/>
    </source>
</evidence>
<gene>
    <name evidence="1" type="primary">gloB</name>
    <name type="ordered locus">Z0236</name>
    <name type="ordered locus">ECs0208</name>
</gene>
<proteinExistence type="inferred from homology"/>
<protein>
    <recommendedName>
        <fullName evidence="1">Hydroxyacylglutathione hydrolase</fullName>
        <ecNumber evidence="1">3.1.2.6</ecNumber>
    </recommendedName>
    <alternativeName>
        <fullName evidence="1">Glyoxalase II</fullName>
        <shortName evidence="1">Glx II</shortName>
    </alternativeName>
</protein>